<reference key="1">
    <citation type="journal article" date="2007" name="J. Bacteriol.">
        <title>The complete genome sequence of the lactic acid bacterial paradigm Lactococcus lactis subsp. cremoris MG1363.</title>
        <authorList>
            <person name="Wegmann U."/>
            <person name="O'Connell-Motherway M."/>
            <person name="Zomer A."/>
            <person name="Buist G."/>
            <person name="Shearman C."/>
            <person name="Canchaya C."/>
            <person name="Ventura M."/>
            <person name="Goesmann A."/>
            <person name="Gasson M.J."/>
            <person name="Kuipers O.P."/>
            <person name="van Sinderen D."/>
            <person name="Kok J."/>
        </authorList>
    </citation>
    <scope>NUCLEOTIDE SEQUENCE [LARGE SCALE GENOMIC DNA]</scope>
    <source>
        <strain>MG1363</strain>
    </source>
</reference>
<reference key="2">
    <citation type="journal article" date="2011" name="J. Biol. Chem.">
        <title>Quaternary structure and functional unit of energy coupling factor (ECF)-type transporters.</title>
        <authorList>
            <person name="ter Beek J."/>
            <person name="Duurkens R.H."/>
            <person name="Erkens G.B."/>
            <person name="Slotboom D.J."/>
        </authorList>
    </citation>
    <scope>SUBUNIT</scope>
    <scope>SUBCELLULAR LOCATION</scope>
    <scope>EXPRESSION IN E.COLI</scope>
    <source>
        <strain>MG1363</strain>
    </source>
</reference>
<sequence length="169" mass="19068">MKKSKTYDIVTIAIVAALYVILTMTPGLSAISYGPIQFRVSEMLNFTAFFNKKYIIAVTIGCMISNFLSFTWVDVIVGGLSTLVFLSLGVLLFDRFKEDYFWNGQLNKAFFFFAIFFSISMFTIALELKFVAETPFLLTWGTLALGEFASLFIGAFIMDKLGKRVDLSR</sequence>
<name>QUET_LACLM</name>
<organism>
    <name type="scientific">Lactococcus lactis subsp. cremoris (strain MG1363)</name>
    <dbReference type="NCBI Taxonomy" id="416870"/>
    <lineage>
        <taxon>Bacteria</taxon>
        <taxon>Bacillati</taxon>
        <taxon>Bacillota</taxon>
        <taxon>Bacilli</taxon>
        <taxon>Lactobacillales</taxon>
        <taxon>Streptococcaceae</taxon>
        <taxon>Lactococcus</taxon>
        <taxon>Lactococcus cremoris subsp. cremoris</taxon>
    </lineage>
</organism>
<accession>A2RM05</accession>
<protein>
    <recommendedName>
        <fullName>Queuosine precursor transporter QueT</fullName>
    </recommendedName>
    <alternativeName>
        <fullName>Queuosine precursor ECF transporter S component QueT</fullName>
    </alternativeName>
</protein>
<evidence type="ECO:0000255" key="1"/>
<evidence type="ECO:0000269" key="2">
    <source>
    </source>
</evidence>
<evidence type="ECO:0000305" key="3"/>
<evidence type="ECO:0000305" key="4">
    <source>
    </source>
</evidence>
<keyword id="KW-1003">Cell membrane</keyword>
<keyword id="KW-0472">Membrane</keyword>
<keyword id="KW-0812">Transmembrane</keyword>
<keyword id="KW-1133">Transmembrane helix</keyword>
<keyword id="KW-0813">Transport</keyword>
<dbReference type="EMBL" id="AM406671">
    <property type="protein sequence ID" value="CAL98332.1"/>
    <property type="molecule type" value="Genomic_DNA"/>
</dbReference>
<dbReference type="RefSeq" id="WP_011835547.1">
    <property type="nucleotide sequence ID" value="NC_009004.1"/>
</dbReference>
<dbReference type="STRING" id="416870.llmg_1760"/>
<dbReference type="TCDB" id="2.A.88.9.1">
    <property type="family name" value="the vitamin uptake transporter (vut) family"/>
</dbReference>
<dbReference type="KEGG" id="llm:llmg_1760"/>
<dbReference type="eggNOG" id="COG4708">
    <property type="taxonomic scope" value="Bacteria"/>
</dbReference>
<dbReference type="HOGENOM" id="CLU_104115_1_1_9"/>
<dbReference type="OrthoDB" id="1706970at2"/>
<dbReference type="PhylomeDB" id="A2RM05"/>
<dbReference type="Proteomes" id="UP000000364">
    <property type="component" value="Chromosome"/>
</dbReference>
<dbReference type="GO" id="GO:0005886">
    <property type="term" value="C:plasma membrane"/>
    <property type="evidence" value="ECO:0000314"/>
    <property type="project" value="UniProtKB"/>
</dbReference>
<dbReference type="InterPro" id="IPR010387">
    <property type="entry name" value="QueT"/>
</dbReference>
<dbReference type="PANTHER" id="PTHR40044:SF1">
    <property type="entry name" value="INTEGRAL MEMBRANE PROTEIN"/>
    <property type="match status" value="1"/>
</dbReference>
<dbReference type="PANTHER" id="PTHR40044">
    <property type="entry name" value="INTEGRAL MEMBRANE PROTEIN-RELATED"/>
    <property type="match status" value="1"/>
</dbReference>
<dbReference type="Pfam" id="PF06177">
    <property type="entry name" value="QueT"/>
    <property type="match status" value="1"/>
</dbReference>
<dbReference type="PIRSF" id="PIRSF031501">
    <property type="entry name" value="QueT"/>
    <property type="match status" value="1"/>
</dbReference>
<feature type="chain" id="PRO_0000409014" description="Queuosine precursor transporter QueT">
    <location>
        <begin position="1"/>
        <end position="169"/>
    </location>
</feature>
<feature type="transmembrane region" description="Helical" evidence="1">
    <location>
        <begin position="9"/>
        <end position="29"/>
    </location>
</feature>
<feature type="transmembrane region" description="Helical" evidence="1">
    <location>
        <begin position="44"/>
        <end position="64"/>
    </location>
</feature>
<feature type="transmembrane region" description="Helical" evidence="1">
    <location>
        <begin position="73"/>
        <end position="93"/>
    </location>
</feature>
<feature type="transmembrane region" description="Helical" evidence="1">
    <location>
        <begin position="110"/>
        <end position="130"/>
    </location>
</feature>
<feature type="transmembrane region" description="Helical" evidence="1">
    <location>
        <begin position="137"/>
        <end position="157"/>
    </location>
</feature>
<comment type="function">
    <text>Probably a queuosine precursor-binding protein that interacts with the energy-coupling factor (ECF) ABC-transporter complex. Unlike classic ABC transporters this ECF transporter provides the energy necessary to transport a number of different substrates. The substrates themselves are bound by transmembrane, not extracytoplasmic soluble proteins.</text>
</comment>
<comment type="subunit">
    <text evidence="2">In E.coli forms a stable energy-coupling factor (ECF) transporter complex composed of 2 membrane-embedded substrate-binding protein (S component), 2 ATP-binding proteins (A and A' components) and 2 transmembrane proteins (T component), probably with a stoichiometry of 2:1:1:2. May be able to interact with more than 1 S component at a time.</text>
</comment>
<comment type="subcellular location">
    <subcellularLocation>
        <location evidence="4">Cell membrane</location>
        <topology evidence="4">Multi-pass membrane protein</topology>
    </subcellularLocation>
</comment>
<comment type="similarity">
    <text evidence="3">Belongs to the vitamin uptake transporter (VUT/ECF) (TC 2.A.88) family.</text>
</comment>
<gene>
    <name type="primary">queT</name>
    <name type="ordered locus">llmg_1760</name>
</gene>
<proteinExistence type="evidence at protein level"/>